<protein>
    <recommendedName>
        <fullName evidence="1">Shikimate kinase</fullName>
        <shortName evidence="1">SK</shortName>
        <ecNumber evidence="1">2.7.1.71</ecNumber>
    </recommendedName>
</protein>
<gene>
    <name evidence="1" type="primary">aroK</name>
    <name type="ordered locus">CLK_1289</name>
</gene>
<organism>
    <name type="scientific">Clostridium botulinum (strain Loch Maree / Type A3)</name>
    <dbReference type="NCBI Taxonomy" id="498214"/>
    <lineage>
        <taxon>Bacteria</taxon>
        <taxon>Bacillati</taxon>
        <taxon>Bacillota</taxon>
        <taxon>Clostridia</taxon>
        <taxon>Eubacteriales</taxon>
        <taxon>Clostridiaceae</taxon>
        <taxon>Clostridium</taxon>
    </lineage>
</organism>
<evidence type="ECO:0000255" key="1">
    <source>
        <dbReference type="HAMAP-Rule" id="MF_00109"/>
    </source>
</evidence>
<dbReference type="EC" id="2.7.1.71" evidence="1"/>
<dbReference type="EMBL" id="CP000962">
    <property type="protein sequence ID" value="ACA53936.1"/>
    <property type="molecule type" value="Genomic_DNA"/>
</dbReference>
<dbReference type="RefSeq" id="WP_012342108.1">
    <property type="nucleotide sequence ID" value="NC_010520.1"/>
</dbReference>
<dbReference type="SMR" id="B1KT67"/>
<dbReference type="KEGG" id="cbl:CLK_1289"/>
<dbReference type="HOGENOM" id="CLU_057607_4_0_9"/>
<dbReference type="UniPathway" id="UPA00053">
    <property type="reaction ID" value="UER00088"/>
</dbReference>
<dbReference type="GO" id="GO:0005829">
    <property type="term" value="C:cytosol"/>
    <property type="evidence" value="ECO:0007669"/>
    <property type="project" value="TreeGrafter"/>
</dbReference>
<dbReference type="GO" id="GO:0005524">
    <property type="term" value="F:ATP binding"/>
    <property type="evidence" value="ECO:0007669"/>
    <property type="project" value="UniProtKB-UniRule"/>
</dbReference>
<dbReference type="GO" id="GO:0000287">
    <property type="term" value="F:magnesium ion binding"/>
    <property type="evidence" value="ECO:0007669"/>
    <property type="project" value="UniProtKB-UniRule"/>
</dbReference>
<dbReference type="GO" id="GO:0004765">
    <property type="term" value="F:shikimate kinase activity"/>
    <property type="evidence" value="ECO:0007669"/>
    <property type="project" value="UniProtKB-UniRule"/>
</dbReference>
<dbReference type="GO" id="GO:0008652">
    <property type="term" value="P:amino acid biosynthetic process"/>
    <property type="evidence" value="ECO:0007669"/>
    <property type="project" value="UniProtKB-KW"/>
</dbReference>
<dbReference type="GO" id="GO:0009073">
    <property type="term" value="P:aromatic amino acid family biosynthetic process"/>
    <property type="evidence" value="ECO:0007669"/>
    <property type="project" value="UniProtKB-KW"/>
</dbReference>
<dbReference type="GO" id="GO:0009423">
    <property type="term" value="P:chorismate biosynthetic process"/>
    <property type="evidence" value="ECO:0007669"/>
    <property type="project" value="UniProtKB-UniRule"/>
</dbReference>
<dbReference type="CDD" id="cd00464">
    <property type="entry name" value="SK"/>
    <property type="match status" value="1"/>
</dbReference>
<dbReference type="Gene3D" id="3.40.50.300">
    <property type="entry name" value="P-loop containing nucleotide triphosphate hydrolases"/>
    <property type="match status" value="1"/>
</dbReference>
<dbReference type="HAMAP" id="MF_00109">
    <property type="entry name" value="Shikimate_kinase"/>
    <property type="match status" value="1"/>
</dbReference>
<dbReference type="InterPro" id="IPR027417">
    <property type="entry name" value="P-loop_NTPase"/>
</dbReference>
<dbReference type="InterPro" id="IPR031322">
    <property type="entry name" value="Shikimate/glucono_kinase"/>
</dbReference>
<dbReference type="InterPro" id="IPR000623">
    <property type="entry name" value="Shikimate_kinase/TSH1"/>
</dbReference>
<dbReference type="PANTHER" id="PTHR21087">
    <property type="entry name" value="SHIKIMATE KINASE"/>
    <property type="match status" value="1"/>
</dbReference>
<dbReference type="PANTHER" id="PTHR21087:SF16">
    <property type="entry name" value="SHIKIMATE KINASE 1, CHLOROPLASTIC"/>
    <property type="match status" value="1"/>
</dbReference>
<dbReference type="Pfam" id="PF01202">
    <property type="entry name" value="SKI"/>
    <property type="match status" value="1"/>
</dbReference>
<dbReference type="PRINTS" id="PR01100">
    <property type="entry name" value="SHIKIMTKNASE"/>
</dbReference>
<dbReference type="SUPFAM" id="SSF52540">
    <property type="entry name" value="P-loop containing nucleoside triphosphate hydrolases"/>
    <property type="match status" value="1"/>
</dbReference>
<proteinExistence type="inferred from homology"/>
<reference key="1">
    <citation type="journal article" date="2007" name="PLoS ONE">
        <title>Analysis of the neurotoxin complex genes in Clostridium botulinum A1-A4 and B1 strains: BoNT/A3, /Ba4 and /B1 clusters are located within plasmids.</title>
        <authorList>
            <person name="Smith T.J."/>
            <person name="Hill K.K."/>
            <person name="Foley B.T."/>
            <person name="Detter J.C."/>
            <person name="Munk A.C."/>
            <person name="Bruce D.C."/>
            <person name="Doggett N.A."/>
            <person name="Smith L.A."/>
            <person name="Marks J.D."/>
            <person name="Xie G."/>
            <person name="Brettin T.S."/>
        </authorList>
    </citation>
    <scope>NUCLEOTIDE SEQUENCE [LARGE SCALE GENOMIC DNA]</scope>
    <source>
        <strain>Loch Maree / Type A3</strain>
    </source>
</reference>
<accession>B1KT67</accession>
<name>AROK_CLOBM</name>
<feature type="chain" id="PRO_1000094384" description="Shikimate kinase">
    <location>
        <begin position="1"/>
        <end position="170"/>
    </location>
</feature>
<feature type="binding site" evidence="1">
    <location>
        <begin position="11"/>
        <end position="16"/>
    </location>
    <ligand>
        <name>ATP</name>
        <dbReference type="ChEBI" id="CHEBI:30616"/>
    </ligand>
</feature>
<feature type="binding site" evidence="1">
    <location>
        <position position="15"/>
    </location>
    <ligand>
        <name>Mg(2+)</name>
        <dbReference type="ChEBI" id="CHEBI:18420"/>
    </ligand>
</feature>
<feature type="binding site" evidence="1">
    <location>
        <position position="33"/>
    </location>
    <ligand>
        <name>substrate</name>
    </ligand>
</feature>
<feature type="binding site" evidence="1">
    <location>
        <position position="57"/>
    </location>
    <ligand>
        <name>substrate</name>
    </ligand>
</feature>
<feature type="binding site" evidence="1">
    <location>
        <position position="79"/>
    </location>
    <ligand>
        <name>substrate</name>
    </ligand>
</feature>
<feature type="binding site" evidence="1">
    <location>
        <position position="119"/>
    </location>
    <ligand>
        <name>ATP</name>
        <dbReference type="ChEBI" id="CHEBI:30616"/>
    </ligand>
</feature>
<feature type="binding site" evidence="1">
    <location>
        <position position="137"/>
    </location>
    <ligand>
        <name>substrate</name>
    </ligand>
</feature>
<keyword id="KW-0028">Amino-acid biosynthesis</keyword>
<keyword id="KW-0057">Aromatic amino acid biosynthesis</keyword>
<keyword id="KW-0067">ATP-binding</keyword>
<keyword id="KW-0963">Cytoplasm</keyword>
<keyword id="KW-0418">Kinase</keyword>
<keyword id="KW-0460">Magnesium</keyword>
<keyword id="KW-0479">Metal-binding</keyword>
<keyword id="KW-0547">Nucleotide-binding</keyword>
<keyword id="KW-0808">Transferase</keyword>
<comment type="function">
    <text evidence="1">Catalyzes the specific phosphorylation of the 3-hydroxyl group of shikimic acid using ATP as a cosubstrate.</text>
</comment>
<comment type="catalytic activity">
    <reaction evidence="1">
        <text>shikimate + ATP = 3-phosphoshikimate + ADP + H(+)</text>
        <dbReference type="Rhea" id="RHEA:13121"/>
        <dbReference type="ChEBI" id="CHEBI:15378"/>
        <dbReference type="ChEBI" id="CHEBI:30616"/>
        <dbReference type="ChEBI" id="CHEBI:36208"/>
        <dbReference type="ChEBI" id="CHEBI:145989"/>
        <dbReference type="ChEBI" id="CHEBI:456216"/>
        <dbReference type="EC" id="2.7.1.71"/>
    </reaction>
</comment>
<comment type="cofactor">
    <cofactor evidence="1">
        <name>Mg(2+)</name>
        <dbReference type="ChEBI" id="CHEBI:18420"/>
    </cofactor>
    <text evidence="1">Binds 1 Mg(2+) ion per subunit.</text>
</comment>
<comment type="pathway">
    <text evidence="1">Metabolic intermediate biosynthesis; chorismate biosynthesis; chorismate from D-erythrose 4-phosphate and phosphoenolpyruvate: step 5/7.</text>
</comment>
<comment type="subunit">
    <text evidence="1">Monomer.</text>
</comment>
<comment type="subcellular location">
    <subcellularLocation>
        <location evidence="1">Cytoplasm</location>
    </subcellularLocation>
</comment>
<comment type="similarity">
    <text evidence="1">Belongs to the shikimate kinase family.</text>
</comment>
<sequence>MENIILIGMPLSGKSTLGRELSKILKYDLIDTDTLIEEMEDKSIKEIFKIYGEDYFREKELKIINKLKKESNKVISTGGGLPIYNKNIYELKKIGFTVYLKVPLEELIKRMVKKEDDARPLLKNDDTKFLEEMYKNRIEIYEKAHTIICNTNYEESLIAIVKAYKKWKGI</sequence>